<accession>P0A9G8</accession>
<accession>P46930</accession>
<comment type="function">
    <text evidence="2 3 5 6 9 10 11">Functions as an intracellular molybdate sensor. The ModE-Mo complex acts as a repressor of the modABC operon, which is involved in the transport of molybdate (PubMed:8550508). Binds modA promoter DNA in the absence of molybdate, however molybdate binding confers increased DNA affinity (PubMed:9044285, PubMed:9210473). Binds the promoter of moaA activating its transcription; binding is not enhanced by molybdate (PubMed:9044285). The protein dimer binds the consensus palindrome sequence 5'-TATAT-N7-TAYAT-3' and a variant 5'-TGTGT-N7-TGYGT-3' (PubMed:16205910, PubMed:9044285, PubMed:9210473). Acts as a regulator of the expression of 67 genes, many of which encode molybdoenzymes, acts both directly and indirectly (PubMed:10206709, PubMed:16205910, PubMed:9466267). ModE also binds tungstate (PubMed:11259434, PubMed:9210473).</text>
</comment>
<comment type="activity regulation">
    <text evidence="3 4 9 10">The ModE dimer binds two molecules of molybdate (MoO4(2-)) with a Kd of 0.8 uM, which results in major changes in the conformation of the DNA-binding domain and confers high-affinity DNA-binding to the transcription factor (PubMed:11259434, PubMed:12581638, PubMed:9044285, PubMed:9210473). Additionally molybdate binding moves the 2 Mop domains closer together, trapping the ligand between them (PubMed:12581638). Can also bind tungstate (PubMed:11259434, PubMed:9210473). Molybdate is bound at the dimer interface using residues from each monomer (PubMed:11259434, PubMed:12581638).</text>
</comment>
<comment type="subunit">
    <text evidence="10">Homodimer.</text>
</comment>
<comment type="subcellular location">
    <subcellularLocation>
        <location evidence="18">Cytoplasm</location>
    </subcellularLocation>
</comment>
<comment type="induction">
    <text evidence="7 8 17">Constitutively expressed at low levels; probably part of the modE-modF operon (Probable) (PubMed:8564363, PubMed:8931336). Does not seem to be autoregulated (PubMed:8931336).</text>
</comment>
<comment type="domain">
    <text evidence="4 8 15 16">Deletion of the C-terminus (from residues 122 on) results in constitutive repression of modA (PubMed:8931336). Contains two major domains: the N-terminal domain I forms a winged helix-turn-helix motif and interacts with DNA (Probable). The C-terminal domain II is the olybdate-binding component and contains a tandem repeat of the Mop domain, each of which forms a beta-barrel (Probable) (PubMed:12581638). The N-terminal domain plays a major role in the dimerization of the protein whereas the C-terminal domain contributes to the stability of the complex (Probable).</text>
</comment>
<comment type="mass spectrometry"/>
<comment type="disruption phenotype">
    <text evidence="2 7 8 11">Loss of repression of the modABC operon (PubMed:8564363, PubMed:8931336). Not essential for molybdopterin cofactor synthesis (PubMed:8931336). Increased dmsA expression under aerobic conditions and reduced expression under anaerobic conditions (PubMed:9466267). Decreased expression of hyc and narG (PubMed:10206709).</text>
</comment>
<comment type="similarity">
    <text evidence="14">Belongs to the ModE family.</text>
</comment>
<reference key="1">
    <citation type="journal article" date="1995" name="Microbiol. Res.">
        <title>Molecular analysis of the molybdate uptake operon, modABCD, of Escherichia coli and modR, a regulatory gene.</title>
        <authorList>
            <person name="Walkenhorst H.M."/>
            <person name="Hemschemeier S.K."/>
            <person name="Eichenlaub R."/>
        </authorList>
    </citation>
    <scope>NUCLEOTIDE SEQUENCE [GENOMIC DNA]</scope>
    <scope>INDUCTION</scope>
    <scope>DISRUPTION PHENOTYPE</scope>
    <source>
        <strain>K12 / MC1000 / ATCC 39531</strain>
    </source>
</reference>
<reference key="2">
    <citation type="journal article" date="1996" name="J. Bacteriol.">
        <title>Repression of the Escherichia coli modABCD (molybdate transport) operon by ModE.</title>
        <authorList>
            <person name="Grunden A.M."/>
            <person name="Ray R.M."/>
            <person name="Rosentel J.K."/>
            <person name="Healy F.G."/>
            <person name="Shanmugam K.T."/>
        </authorList>
    </citation>
    <scope>NUCLEOTIDE SEQUENCE [GENOMIC DNA]</scope>
    <scope>PROTEIN SEQUENCE OF 1-12</scope>
    <scope>FUNCTION AS A REPRESSOR</scope>
    <scope>INDUCTION</scope>
    <scope>MASS SPECTROMETRY</scope>
    <scope>DNA-BINDING</scope>
    <scope>MUTAGENESIS OF ALA-76; THR-125 AND GLY-133</scope>
    <source>
        <strain>K12 / BW545</strain>
    </source>
</reference>
<reference key="3">
    <citation type="submission" date="1995-10" db="EMBL/GenBank/DDBJ databases">
        <title>Sequence spanning gap between Genbank entries L34009 and X69182.</title>
        <authorList>
            <person name="Kim K."/>
            <person name="Allen E."/>
            <person name="Araujo R."/>
            <person name="Aparicio A."/>
            <person name="Botstein D."/>
            <person name="Cherry M."/>
            <person name="Chung E."/>
            <person name="Dietrich F."/>
            <person name="Duncan M."/>
            <person name="Federspiel N."/>
            <person name="Kalman S."/>
            <person name="Komp C."/>
            <person name="Lashkari D."/>
            <person name="Lew H."/>
            <person name="Lin D."/>
            <person name="Namath A."/>
            <person name="Oefner P."/>
            <person name="Davis R."/>
        </authorList>
    </citation>
    <scope>NUCLEOTIDE SEQUENCE [GENOMIC DNA]</scope>
    <source>
        <strain>K12 / MG1655 / ATCC 47076</strain>
    </source>
</reference>
<reference key="4">
    <citation type="journal article" date="1996" name="DNA Res.">
        <title>A 718-kb DNA sequence of the Escherichia coli K-12 genome corresponding to the 12.7-28.0 min region on the linkage map.</title>
        <authorList>
            <person name="Oshima T."/>
            <person name="Aiba H."/>
            <person name="Baba T."/>
            <person name="Fujita K."/>
            <person name="Hayashi K."/>
            <person name="Honjo A."/>
            <person name="Ikemoto K."/>
            <person name="Inada T."/>
            <person name="Itoh T."/>
            <person name="Kajihara M."/>
            <person name="Kanai K."/>
            <person name="Kashimoto K."/>
            <person name="Kimura S."/>
            <person name="Kitagawa M."/>
            <person name="Makino K."/>
            <person name="Masuda S."/>
            <person name="Miki T."/>
            <person name="Mizobuchi K."/>
            <person name="Mori H."/>
            <person name="Motomura K."/>
            <person name="Nakamura Y."/>
            <person name="Nashimoto H."/>
            <person name="Nishio Y."/>
            <person name="Saito N."/>
            <person name="Sampei G."/>
            <person name="Seki Y."/>
            <person name="Tagami H."/>
            <person name="Takemoto K."/>
            <person name="Wada C."/>
            <person name="Yamamoto Y."/>
            <person name="Yano M."/>
            <person name="Horiuchi T."/>
        </authorList>
    </citation>
    <scope>NUCLEOTIDE SEQUENCE [LARGE SCALE GENOMIC DNA]</scope>
    <source>
        <strain>K12 / W3110 / ATCC 27325 / DSM 5911</strain>
    </source>
</reference>
<reference key="5">
    <citation type="journal article" date="1997" name="Science">
        <title>The complete genome sequence of Escherichia coli K-12.</title>
        <authorList>
            <person name="Blattner F.R."/>
            <person name="Plunkett G. III"/>
            <person name="Bloch C.A."/>
            <person name="Perna N.T."/>
            <person name="Burland V."/>
            <person name="Riley M."/>
            <person name="Collado-Vides J."/>
            <person name="Glasner J.D."/>
            <person name="Rode C.K."/>
            <person name="Mayhew G.F."/>
            <person name="Gregor J."/>
            <person name="Davis N.W."/>
            <person name="Kirkpatrick H.A."/>
            <person name="Goeden M.A."/>
            <person name="Rose D.J."/>
            <person name="Mau B."/>
            <person name="Shao Y."/>
        </authorList>
    </citation>
    <scope>NUCLEOTIDE SEQUENCE [LARGE SCALE GENOMIC DNA]</scope>
    <source>
        <strain>K12 / MG1655 / ATCC 47076</strain>
    </source>
</reference>
<reference key="6">
    <citation type="journal article" date="2006" name="Mol. Syst. Biol.">
        <title>Highly accurate genome sequences of Escherichia coli K-12 strains MG1655 and W3110.</title>
        <authorList>
            <person name="Hayashi K."/>
            <person name="Morooka N."/>
            <person name="Yamamoto Y."/>
            <person name="Fujita K."/>
            <person name="Isono K."/>
            <person name="Choi S."/>
            <person name="Ohtsubo E."/>
            <person name="Baba T."/>
            <person name="Wanner B.L."/>
            <person name="Mori H."/>
            <person name="Horiuchi T."/>
        </authorList>
    </citation>
    <scope>NUCLEOTIDE SEQUENCE [LARGE SCALE GENOMIC DNA]</scope>
    <source>
        <strain>K12 / W3110 / ATCC 27325 / DSM 5911</strain>
    </source>
</reference>
<reference key="7">
    <citation type="journal article" date="1996" name="FEMS Microbiol. Lett.">
        <title>The Escherichia coli modE gene: effect of modE mutations on molybdate dependent modA expression.</title>
        <authorList>
            <person name="McNicholas P.M."/>
            <person name="Chiang R.C."/>
            <person name="Gunsalus R.P."/>
        </authorList>
    </citation>
    <scope>FUNCTION AS A REPRESSOR</scope>
    <scope>INDUCTION</scope>
    <scope>DOMAIN</scope>
    <scope>DISRUPTION PHENOTYPE</scope>
    <source>
        <strain>K12 / MC4100 / ATCC 35695 / DSM 6574</strain>
    </source>
</reference>
<reference key="8">
    <citation type="journal article" date="1997" name="Eur. J. Biochem.">
        <title>Characterisation of the molybdenum-responsive ModE regulatory protein and its binding to the promoter region of the modABCD (molybdenum transport) operon of Escherichia coli.</title>
        <authorList>
            <person name="Anderson L.A."/>
            <person name="Palmer T."/>
            <person name="Price N.C."/>
            <person name="Bornemann S."/>
            <person name="Boxer D.H."/>
            <person name="Pau R.N."/>
        </authorList>
    </citation>
    <scope>FUNCTION AS A REPRESSOR</scope>
    <scope>ACTIVITY REGULATION</scope>
    <scope>SUBUNIT</scope>
    <scope>DNA-BINDING</scope>
    <source>
        <strain>K12 / MC1000 / ATCC 39531</strain>
    </source>
</reference>
<reference key="9">
    <citation type="journal article" date="1997" name="Mol. Microbiol.">
        <title>Characterization of the ModE DNA-binding sites in the control regions of modABCD and moaABCDE of Escherichia coli.</title>
        <authorList>
            <person name="McNicholas P.M."/>
            <person name="Rech S.A."/>
            <person name="Gunsalus R.P."/>
        </authorList>
    </citation>
    <scope>FUNCTION AS A REPRESSOR</scope>
    <scope>FUNCTION AS AN ACTIVATOR</scope>
    <scope>ACTIVITY REGULATION</scope>
    <scope>DNA-BINDING</scope>
</reference>
<reference key="10">
    <citation type="journal article" date="1998" name="Mol. Microbiol.">
        <title>Anaerobic regulation of the Escherichia coli dmsABC operon requires the molybdate-responsive regulator ModE.</title>
        <authorList>
            <person name="McNicholas P.M."/>
            <person name="Chiang R.C."/>
            <person name="Gunsalus R.P."/>
        </authorList>
    </citation>
    <scope>FUNCTION</scope>
    <scope>DISRUPTION PHENOTYPE</scope>
    <scope>DNA-BINDING</scope>
    <source>
        <strain>K12 / MC4100 / ATCC 35695 / DSM 6574</strain>
    </source>
</reference>
<reference key="11">
    <citation type="journal article" date="1999" name="Microbiology">
        <title>Transcriptional regulation of molybdoenzyme synthesis in Escherichia coli in response to molybdenum: ModE-molybdate, a repressor of the modABCD (molybdate transport) operon is a secondary transcriptional activator for the hyc and nar operons.</title>
        <authorList>
            <person name="Self W.T."/>
            <person name="Grunden A.M."/>
            <person name="Hasona A."/>
            <person name="Shanmugam K.T."/>
        </authorList>
    </citation>
    <scope>FUNCTION</scope>
    <scope>DISRUPTION PHENOTYPE</scope>
    <source>
        <strain>K12 / BW545</strain>
    </source>
</reference>
<reference key="12">
    <citation type="journal article" date="2005" name="Arch. Microbiol.">
        <title>Global gene expression analysis revealed an unsuspected deo operon under the control of molybdate sensor, ModE protein, in Escherichia coli.</title>
        <authorList>
            <person name="Tao H."/>
            <person name="Hasona A."/>
            <person name="Do P.M."/>
            <person name="Ingram L.O."/>
            <person name="Shanmugam K.T."/>
        </authorList>
    </citation>
    <scope>FUNCTION</scope>
    <scope>REGULON</scope>
    <scope>DNA-BINDING</scope>
</reference>
<reference evidence="19 20" key="13">
    <citation type="journal article" date="1999" name="EMBO J.">
        <title>The high-resolution crystal structure of the molybdate-dependent transcriptional regulator (ModE) from Escherichia coli: a novel combination of domain folds.</title>
        <authorList>
            <person name="Hall D.R."/>
            <person name="Gourley D.G."/>
            <person name="Leonard G.A."/>
            <person name="Duke E.M.H."/>
            <person name="Anderson L.A."/>
            <person name="Boxer D.H."/>
            <person name="Hunter W.N."/>
        </authorList>
    </citation>
    <scope>X-RAY CRYSTALLOGRAPHY (1.75 ANGSTROMS)</scope>
    <scope>DOMAIN</scope>
    <source>
        <strain>K12 / MC1000 / ATCC 39531</strain>
    </source>
</reference>
<reference evidence="21 22" key="14">
    <citation type="journal article" date="2001" name="J. Biol. Chem.">
        <title>Oxyanion binding alters conformation and quaternary structure of the c-terminal domain of the transcriptional regulator mode. Implications for molybdate-dependent regulation, signaling, storage, and transport.</title>
        <authorList>
            <person name="Gourley D.G."/>
            <person name="Schuttelkopf A.W."/>
            <person name="Anderson L.A."/>
            <person name="Price N.C."/>
            <person name="Boxer D.H."/>
            <person name="Hunter W.N."/>
        </authorList>
    </citation>
    <scope>X-RAY CRYSTALLOGRAPHY (1.82 ANGSTROMS) OF 123-262 IN COMPLEX WITH MOLYBDATE</scope>
    <scope>ACTIVITY REGULATION</scope>
    <scope>DOMAIN</scope>
</reference>
<reference evidence="23" key="15">
    <citation type="journal article" date="2003" name="J. Mol. Biol.">
        <title>Crystal structure of activated ModE reveals conformational changes involving both oxyanion and DNA-binding domains.</title>
        <authorList>
            <person name="Schuttelkopf A.W."/>
            <person name="Boxer D.H."/>
            <person name="Hunter W.N."/>
        </authorList>
    </citation>
    <scope>X-RAY CRYSTALLOGRAPHY (2.75 ANGSTROMS) IN COMPLEX WITH MOLYBDATE</scope>
    <scope>ACTIVITY REGULATION</scope>
    <scope>DOMAIN</scope>
</reference>
<dbReference type="EMBL" id="U07867">
    <property type="protein sequence ID" value="AAB06892.1"/>
    <property type="molecule type" value="Genomic_DNA"/>
</dbReference>
<dbReference type="EMBL" id="U27192">
    <property type="protein sequence ID" value="AAB60175.1"/>
    <property type="molecule type" value="Genomic_DNA"/>
</dbReference>
<dbReference type="EMBL" id="U34275">
    <property type="protein sequence ID" value="AAA77051.1"/>
    <property type="molecule type" value="Genomic_DNA"/>
</dbReference>
<dbReference type="EMBL" id="U00096">
    <property type="protein sequence ID" value="AAC73848.1"/>
    <property type="molecule type" value="Genomic_DNA"/>
</dbReference>
<dbReference type="EMBL" id="AP009048">
    <property type="protein sequence ID" value="BAA35425.1"/>
    <property type="molecule type" value="Genomic_DNA"/>
</dbReference>
<dbReference type="PIR" id="JC6037">
    <property type="entry name" value="JC6037"/>
</dbReference>
<dbReference type="RefSeq" id="NP_415282.1">
    <property type="nucleotide sequence ID" value="NC_000913.3"/>
</dbReference>
<dbReference type="RefSeq" id="WP_001147439.1">
    <property type="nucleotide sequence ID" value="NZ_SSZK01000002.1"/>
</dbReference>
<dbReference type="PDB" id="1B9M">
    <property type="method" value="X-ray"/>
    <property type="resolution" value="1.75 A"/>
    <property type="chains" value="A/B=1-262"/>
</dbReference>
<dbReference type="PDB" id="1B9N">
    <property type="method" value="X-ray"/>
    <property type="resolution" value="2.09 A"/>
    <property type="chains" value="A/B=1-262"/>
</dbReference>
<dbReference type="PDB" id="1H9R">
    <property type="method" value="X-ray"/>
    <property type="resolution" value="1.90 A"/>
    <property type="chains" value="A/B=124-262"/>
</dbReference>
<dbReference type="PDB" id="1H9S">
    <property type="method" value="X-ray"/>
    <property type="resolution" value="1.82 A"/>
    <property type="chains" value="A/B=124-262"/>
</dbReference>
<dbReference type="PDB" id="1O7L">
    <property type="method" value="X-ray"/>
    <property type="resolution" value="2.75 A"/>
    <property type="chains" value="A/B/C/D=1-262"/>
</dbReference>
<dbReference type="PDBsum" id="1B9M"/>
<dbReference type="PDBsum" id="1B9N"/>
<dbReference type="PDBsum" id="1H9R"/>
<dbReference type="PDBsum" id="1H9S"/>
<dbReference type="PDBsum" id="1O7L"/>
<dbReference type="SMR" id="P0A9G8"/>
<dbReference type="BioGRID" id="4259327">
    <property type="interactions" value="85"/>
</dbReference>
<dbReference type="BioGRID" id="849742">
    <property type="interactions" value="1"/>
</dbReference>
<dbReference type="ComplexPortal" id="CPX-2115">
    <property type="entry name" value="modE transcription regulation complex"/>
</dbReference>
<dbReference type="DIP" id="DIP-10238N"/>
<dbReference type="FunCoup" id="P0A9G8">
    <property type="interactions" value="55"/>
</dbReference>
<dbReference type="IntAct" id="P0A9G8">
    <property type="interactions" value="1"/>
</dbReference>
<dbReference type="STRING" id="511145.b0761"/>
<dbReference type="jPOST" id="P0A9G8"/>
<dbReference type="PaxDb" id="511145-b0761"/>
<dbReference type="EnsemblBacteria" id="AAC73848">
    <property type="protein sequence ID" value="AAC73848"/>
    <property type="gene ID" value="b0761"/>
</dbReference>
<dbReference type="GeneID" id="75170760"/>
<dbReference type="GeneID" id="945366"/>
<dbReference type="KEGG" id="ecj:JW0744"/>
<dbReference type="KEGG" id="eco:b0761"/>
<dbReference type="KEGG" id="ecoc:C3026_03860"/>
<dbReference type="PATRIC" id="fig|1411691.4.peg.1517"/>
<dbReference type="EchoBASE" id="EB3017"/>
<dbReference type="eggNOG" id="COG2005">
    <property type="taxonomic scope" value="Bacteria"/>
</dbReference>
<dbReference type="eggNOG" id="COG3585">
    <property type="taxonomic scope" value="Bacteria"/>
</dbReference>
<dbReference type="HOGENOM" id="CLU_087839_0_0_6"/>
<dbReference type="InParanoid" id="P0A9G8"/>
<dbReference type="OMA" id="SYKTAWH"/>
<dbReference type="OrthoDB" id="9800709at2"/>
<dbReference type="PhylomeDB" id="P0A9G8"/>
<dbReference type="BioCyc" id="EcoCyc:MONOMER0-185"/>
<dbReference type="EvolutionaryTrace" id="P0A9G8"/>
<dbReference type="PRO" id="PR:P0A9G8"/>
<dbReference type="Proteomes" id="UP000000625">
    <property type="component" value="Chromosome"/>
</dbReference>
<dbReference type="GO" id="GO:0005829">
    <property type="term" value="C:cytosol"/>
    <property type="evidence" value="ECO:0000314"/>
    <property type="project" value="EcoCyc"/>
</dbReference>
<dbReference type="GO" id="GO:1990198">
    <property type="term" value="C:ModE complex"/>
    <property type="evidence" value="ECO:0000353"/>
    <property type="project" value="ComplexPortal"/>
</dbReference>
<dbReference type="GO" id="GO:0000987">
    <property type="term" value="F:cis-regulatory region sequence-specific DNA binding"/>
    <property type="evidence" value="ECO:0000314"/>
    <property type="project" value="EcoCyc"/>
</dbReference>
<dbReference type="GO" id="GO:0030151">
    <property type="term" value="F:molybdenum ion binding"/>
    <property type="evidence" value="ECO:0000314"/>
    <property type="project" value="EcoCyc"/>
</dbReference>
<dbReference type="GO" id="GO:0015689">
    <property type="term" value="P:molybdate ion transport"/>
    <property type="evidence" value="ECO:0007669"/>
    <property type="project" value="InterPro"/>
</dbReference>
<dbReference type="GO" id="GO:0045892">
    <property type="term" value="P:negative regulation of DNA-templated transcription"/>
    <property type="evidence" value="ECO:0000314"/>
    <property type="project" value="ComplexPortal"/>
</dbReference>
<dbReference type="GO" id="GO:2000143">
    <property type="term" value="P:negative regulation of DNA-templated transcription initiation"/>
    <property type="evidence" value="ECO:0000314"/>
    <property type="project" value="EcoCyc"/>
</dbReference>
<dbReference type="GO" id="GO:0045893">
    <property type="term" value="P:positive regulation of DNA-templated transcription"/>
    <property type="evidence" value="ECO:0000314"/>
    <property type="project" value="ComplexPortal"/>
</dbReference>
<dbReference type="GO" id="GO:0006355">
    <property type="term" value="P:regulation of DNA-templated transcription"/>
    <property type="evidence" value="ECO:0000318"/>
    <property type="project" value="GO_Central"/>
</dbReference>
<dbReference type="FunFam" id="1.10.10.10:FF:000154">
    <property type="entry name" value="DNA-binding transcriptional regulator ModE"/>
    <property type="match status" value="1"/>
</dbReference>
<dbReference type="FunFam" id="2.40.50.100:FF:000021">
    <property type="entry name" value="DNA-binding transcriptional regulator ModE"/>
    <property type="match status" value="1"/>
</dbReference>
<dbReference type="Gene3D" id="2.40.50.100">
    <property type="match status" value="2"/>
</dbReference>
<dbReference type="Gene3D" id="1.10.10.10">
    <property type="entry name" value="Winged helix-like DNA-binding domain superfamily/Winged helix DNA-binding domain"/>
    <property type="match status" value="1"/>
</dbReference>
<dbReference type="InterPro" id="IPR008995">
    <property type="entry name" value="Mo/tungstate-bd_C_term_dom"/>
</dbReference>
<dbReference type="InterPro" id="IPR016462">
    <property type="entry name" value="ModE"/>
</dbReference>
<dbReference type="InterPro" id="IPR003725">
    <property type="entry name" value="ModE-bd_N"/>
</dbReference>
<dbReference type="InterPro" id="IPR051815">
    <property type="entry name" value="Molybdate_resp_trans_reg"/>
</dbReference>
<dbReference type="InterPro" id="IPR004606">
    <property type="entry name" value="Mop_domain"/>
</dbReference>
<dbReference type="InterPro" id="IPR005116">
    <property type="entry name" value="Transp-assoc_OB_typ1"/>
</dbReference>
<dbReference type="InterPro" id="IPR036388">
    <property type="entry name" value="WH-like_DNA-bd_sf"/>
</dbReference>
<dbReference type="InterPro" id="IPR036390">
    <property type="entry name" value="WH_DNA-bd_sf"/>
</dbReference>
<dbReference type="NCBIfam" id="TIGR00637">
    <property type="entry name" value="ModE_repress"/>
    <property type="match status" value="1"/>
</dbReference>
<dbReference type="NCBIfam" id="TIGR00638">
    <property type="entry name" value="Mop"/>
    <property type="match status" value="1"/>
</dbReference>
<dbReference type="NCBIfam" id="NF007957">
    <property type="entry name" value="PRK10676.1"/>
    <property type="match status" value="1"/>
</dbReference>
<dbReference type="PANTHER" id="PTHR30432:SF1">
    <property type="entry name" value="DNA-BINDING TRANSCRIPTIONAL DUAL REGULATOR MODE"/>
    <property type="match status" value="1"/>
</dbReference>
<dbReference type="PANTHER" id="PTHR30432">
    <property type="entry name" value="TRANSCRIPTIONAL REGULATOR MODE"/>
    <property type="match status" value="1"/>
</dbReference>
<dbReference type="Pfam" id="PF03459">
    <property type="entry name" value="TOBE"/>
    <property type="match status" value="2"/>
</dbReference>
<dbReference type="PIRSF" id="PIRSF005763">
    <property type="entry name" value="Txn_reg_ModE"/>
    <property type="match status" value="1"/>
</dbReference>
<dbReference type="SUPFAM" id="SSF50331">
    <property type="entry name" value="MOP-like"/>
    <property type="match status" value="2"/>
</dbReference>
<dbReference type="SUPFAM" id="SSF46785">
    <property type="entry name" value="Winged helix' DNA-binding domain"/>
    <property type="match status" value="1"/>
</dbReference>
<dbReference type="PROSITE" id="PS51866">
    <property type="entry name" value="MOP"/>
    <property type="match status" value="2"/>
</dbReference>
<proteinExistence type="evidence at protein level"/>
<organism>
    <name type="scientific">Escherichia coli (strain K12)</name>
    <dbReference type="NCBI Taxonomy" id="83333"/>
    <lineage>
        <taxon>Bacteria</taxon>
        <taxon>Pseudomonadati</taxon>
        <taxon>Pseudomonadota</taxon>
        <taxon>Gammaproteobacteria</taxon>
        <taxon>Enterobacterales</taxon>
        <taxon>Enterobacteriaceae</taxon>
        <taxon>Escherichia</taxon>
    </lineage>
</organism>
<evidence type="ECO:0000255" key="1">
    <source>
        <dbReference type="PROSITE-ProRule" id="PRU01213"/>
    </source>
</evidence>
<evidence type="ECO:0000269" key="2">
    <source>
    </source>
</evidence>
<evidence type="ECO:0000269" key="3">
    <source>
    </source>
</evidence>
<evidence type="ECO:0000269" key="4">
    <source>
    </source>
</evidence>
<evidence type="ECO:0000269" key="5">
    <source>
    </source>
</evidence>
<evidence type="ECO:0000269" key="6">
    <source>
    </source>
</evidence>
<evidence type="ECO:0000269" key="7">
    <source>
    </source>
</evidence>
<evidence type="ECO:0000269" key="8">
    <source>
    </source>
</evidence>
<evidence type="ECO:0000269" key="9">
    <source>
    </source>
</evidence>
<evidence type="ECO:0000269" key="10">
    <source>
    </source>
</evidence>
<evidence type="ECO:0000269" key="11">
    <source>
    </source>
</evidence>
<evidence type="ECO:0000303" key="12">
    <source>
    </source>
</evidence>
<evidence type="ECO:0000303" key="13">
    <source>
    </source>
</evidence>
<evidence type="ECO:0000305" key="14"/>
<evidence type="ECO:0000305" key="15">
    <source>
    </source>
</evidence>
<evidence type="ECO:0000305" key="16">
    <source>
    </source>
</evidence>
<evidence type="ECO:0000305" key="17">
    <source>
    </source>
</evidence>
<evidence type="ECO:0000305" key="18">
    <source>
    </source>
</evidence>
<evidence type="ECO:0007744" key="19">
    <source>
        <dbReference type="PDB" id="1B9M"/>
    </source>
</evidence>
<evidence type="ECO:0007744" key="20">
    <source>
        <dbReference type="PDB" id="1B9N"/>
    </source>
</evidence>
<evidence type="ECO:0007744" key="21">
    <source>
        <dbReference type="PDB" id="1H9R"/>
    </source>
</evidence>
<evidence type="ECO:0007744" key="22">
    <source>
        <dbReference type="PDB" id="1H9S"/>
    </source>
</evidence>
<evidence type="ECO:0007744" key="23">
    <source>
        <dbReference type="PDB" id="1O7L"/>
    </source>
</evidence>
<evidence type="ECO:0007829" key="24">
    <source>
        <dbReference type="PDB" id="1B9M"/>
    </source>
</evidence>
<evidence type="ECO:0007829" key="25">
    <source>
        <dbReference type="PDB" id="1H9S"/>
    </source>
</evidence>
<protein>
    <recommendedName>
        <fullName>DNA-binding transcriptional dual regulator ModE</fullName>
    </recommendedName>
</protein>
<feature type="chain" id="PRO_0000201125" description="DNA-binding transcriptional dual regulator ModE">
    <location>
        <begin position="1"/>
        <end position="262"/>
    </location>
</feature>
<feature type="domain" description="Mop 1" evidence="1">
    <location>
        <begin position="124"/>
        <end position="191"/>
    </location>
</feature>
<feature type="domain" description="Mop 2" evidence="1">
    <location>
        <begin position="196"/>
        <end position="260"/>
    </location>
</feature>
<feature type="DNA-binding region" description="H-T-H motif">
    <location>
        <begin position="33"/>
        <end position="79"/>
    </location>
</feature>
<feature type="region of interest" description="I" evidence="15">
    <location>
        <begin position="1"/>
        <end position="121"/>
    </location>
</feature>
<feature type="region of interest" description="Required for dimer formation and molybdate binding">
    <location>
        <begin position="125"/>
        <end position="133"/>
    </location>
</feature>
<feature type="binding site" evidence="3 4 22 23">
    <location>
        <position position="126"/>
    </location>
    <ligand>
        <name>molybdate</name>
        <dbReference type="ChEBI" id="CHEBI:36264"/>
    </ligand>
</feature>
<feature type="binding site" evidence="3 4 22 23">
    <location>
        <position position="128"/>
    </location>
    <ligand>
        <name>molybdate</name>
        <dbReference type="ChEBI" id="CHEBI:36264"/>
    </ligand>
</feature>
<feature type="binding site" evidence="3 4 22 23">
    <location>
        <position position="163"/>
    </location>
    <ligand>
        <name>molybdate</name>
        <dbReference type="ChEBI" id="CHEBI:36264"/>
    </ligand>
</feature>
<feature type="binding site" evidence="3 4 22 23">
    <location>
        <position position="166"/>
    </location>
    <ligand>
        <name>molybdate</name>
        <dbReference type="ChEBI" id="CHEBI:36264"/>
    </ligand>
</feature>
<feature type="binding site" evidence="3 4 22 23">
    <location>
        <position position="183"/>
    </location>
    <ligand>
        <name>molybdate</name>
        <dbReference type="ChEBI" id="CHEBI:36264"/>
    </ligand>
</feature>
<feature type="binding site" evidence="3 4 22 23">
    <location>
        <position position="184"/>
    </location>
    <ligand>
        <name>molybdate</name>
        <dbReference type="ChEBI" id="CHEBI:36264"/>
    </ligand>
</feature>
<feature type="mutagenesis site" description="Partial loss of repression by ModE." evidence="6">
    <original>A</original>
    <variation>V</variation>
    <location>
        <position position="76"/>
    </location>
</feature>
<feature type="mutagenesis site" description="Transcription repression by ModE even in the absence of molybdate." evidence="6">
    <original>T</original>
    <variation>I</variation>
    <location>
        <position position="125"/>
    </location>
</feature>
<feature type="mutagenesis site" description="Transcription repression by ModE even in the absence of molybdate." evidence="6">
    <original>G</original>
    <variation>D</variation>
    <location>
        <position position="133"/>
    </location>
</feature>
<feature type="mutagenesis site" description="Transcription repression by ModE even in the absence of molybdate." evidence="6">
    <location>
        <begin position="216"/>
        <end position="262"/>
    </location>
</feature>
<feature type="strand" evidence="24">
    <location>
        <begin position="4"/>
        <end position="11"/>
    </location>
</feature>
<feature type="strand" evidence="24">
    <location>
        <begin position="14"/>
        <end position="17"/>
    </location>
</feature>
<feature type="helix" evidence="24">
    <location>
        <begin position="19"/>
        <end position="31"/>
    </location>
</feature>
<feature type="helix" evidence="24">
    <location>
        <begin position="34"/>
        <end position="41"/>
    </location>
</feature>
<feature type="helix" evidence="24">
    <location>
        <begin position="45"/>
        <end position="59"/>
    </location>
</feature>
<feature type="strand" evidence="24">
    <location>
        <begin position="64"/>
        <end position="66"/>
    </location>
</feature>
<feature type="strand" evidence="24">
    <location>
        <begin position="76"/>
        <end position="78"/>
    </location>
</feature>
<feature type="helix" evidence="24">
    <location>
        <begin position="80"/>
        <end position="105"/>
    </location>
</feature>
<feature type="helix" evidence="24">
    <location>
        <begin position="114"/>
        <end position="121"/>
    </location>
</feature>
<feature type="strand" evidence="24">
    <location>
        <begin position="123"/>
        <end position="135"/>
    </location>
</feature>
<feature type="strand" evidence="24">
    <location>
        <begin position="139"/>
        <end position="142"/>
    </location>
</feature>
<feature type="strand" evidence="24">
    <location>
        <begin position="145"/>
        <end position="151"/>
    </location>
</feature>
<feature type="strand" evidence="24">
    <location>
        <begin position="157"/>
        <end position="161"/>
    </location>
</feature>
<feature type="helix" evidence="24">
    <location>
        <begin position="164"/>
        <end position="169"/>
    </location>
</feature>
<feature type="strand" evidence="24">
    <location>
        <begin position="177"/>
        <end position="182"/>
    </location>
</feature>
<feature type="helix" evidence="24">
    <location>
        <begin position="184"/>
        <end position="186"/>
    </location>
</feature>
<feature type="strand" evidence="24">
    <location>
        <begin position="188"/>
        <end position="191"/>
    </location>
</feature>
<feature type="helix" evidence="24">
    <location>
        <begin position="193"/>
        <end position="197"/>
    </location>
</feature>
<feature type="strand" evidence="24">
    <location>
        <begin position="199"/>
        <end position="212"/>
    </location>
</feature>
<feature type="strand" evidence="24">
    <location>
        <begin position="214"/>
        <end position="222"/>
    </location>
</feature>
<feature type="turn" evidence="25">
    <location>
        <begin position="224"/>
        <end position="226"/>
    </location>
</feature>
<feature type="strand" evidence="24">
    <location>
        <begin position="228"/>
        <end position="234"/>
    </location>
</feature>
<feature type="helix" evidence="24">
    <location>
        <begin position="235"/>
        <end position="238"/>
    </location>
</feature>
<feature type="strand" evidence="24">
    <location>
        <begin position="246"/>
        <end position="251"/>
    </location>
</feature>
<feature type="helix" evidence="24">
    <location>
        <begin position="253"/>
        <end position="255"/>
    </location>
</feature>
<feature type="strand" evidence="24">
    <location>
        <begin position="257"/>
        <end position="261"/>
    </location>
</feature>
<name>MODE_ECOLI</name>
<gene>
    <name evidence="12" type="primary">modE</name>
    <name evidence="13" type="synonym">modR</name>
    <name type="ordered locus">b0761</name>
    <name type="ordered locus">JW0744</name>
</gene>
<keyword id="KW-0002">3D-structure</keyword>
<keyword id="KW-0010">Activator</keyword>
<keyword id="KW-0963">Cytoplasm</keyword>
<keyword id="KW-0903">Direct protein sequencing</keyword>
<keyword id="KW-0238">DNA-binding</keyword>
<keyword id="KW-0479">Metal-binding</keyword>
<keyword id="KW-0500">Molybdenum</keyword>
<keyword id="KW-1185">Reference proteome</keyword>
<keyword id="KW-0677">Repeat</keyword>
<keyword id="KW-0678">Repressor</keyword>
<keyword id="KW-0804">Transcription</keyword>
<keyword id="KW-0805">Transcription regulation</keyword>
<keyword id="KW-0813">Transport</keyword>
<sequence>MQAEILLTLKLQQKLFADPRRISLLKHIALSGSISQGAKDAGISYKSAWDAINEMNQLSEHILVERATGGKGGGGAVLTRYGQRLIQLYDLLAQIQQKAFDVLSDDDALPLNSLLAAISRFSLQTSARNQWFGTITARDHDDVQQHVDVLLADGKTRLKVAITAQSGARLGLDEGKEVLILLKAPWVGITQDEAVAQNADNQLPGIISHIERGAEQCEVLMALPDGQTLCATVPVNEATSLQQGQNVTAYFNADSVIIATLC</sequence>